<protein>
    <recommendedName>
        <fullName>Oligopeptide-binding protein AmiA</fullName>
    </recommendedName>
</protein>
<feature type="signal peptide" evidence="1">
    <location>
        <begin position="1"/>
        <end position="22"/>
    </location>
</feature>
<feature type="chain" id="PRO_0000031787" description="Oligopeptide-binding protein AmiA">
    <location>
        <begin position="23"/>
        <end position="659"/>
    </location>
</feature>
<feature type="lipid moiety-binding region" description="N-palmitoyl cysteine" evidence="1">
    <location>
        <position position="23"/>
    </location>
</feature>
<feature type="lipid moiety-binding region" description="S-diacylglycerol cysteine" evidence="1">
    <location>
        <position position="23"/>
    </location>
</feature>
<feature type="sequence conflict" description="In Ref. 1; CAA35213." evidence="1" ref="1">
    <original>S</original>
    <variation>R</variation>
    <location>
        <position position="54"/>
    </location>
</feature>
<feature type="sequence conflict" description="In Ref. 1; CAA35213." evidence="1" ref="1">
    <original>A</original>
    <variation>R</variation>
    <location>
        <position position="421"/>
    </location>
</feature>
<feature type="sequence conflict" description="In Ref. 1; CAA35213." evidence="1" ref="1">
    <original>R</original>
    <variation>K</variation>
    <location>
        <position position="557"/>
    </location>
</feature>
<feature type="sequence conflict" description="In Ref. 1; CAA35213." evidence="1" ref="1">
    <original>L</original>
    <variation>F</variation>
    <location>
        <position position="562"/>
    </location>
</feature>
<feature type="sequence conflict" description="In Ref. 1; CAA35213." evidence="1" ref="1">
    <original>S</original>
    <variation>L</variation>
    <location>
        <position position="622"/>
    </location>
</feature>
<feature type="sequence conflict" description="In Ref. 1; CAA35213." evidence="1" ref="1">
    <original>V</original>
    <variation>A</variation>
    <location>
        <position position="626"/>
    </location>
</feature>
<feature type="strand" evidence="2">
    <location>
        <begin position="36"/>
        <end position="41"/>
    </location>
</feature>
<feature type="turn" evidence="2">
    <location>
        <begin position="50"/>
        <end position="52"/>
    </location>
</feature>
<feature type="helix" evidence="2">
    <location>
        <begin position="56"/>
        <end position="62"/>
    </location>
</feature>
<feature type="turn" evidence="2">
    <location>
        <begin position="63"/>
        <end position="65"/>
    </location>
</feature>
<feature type="strand" evidence="2">
    <location>
        <begin position="69"/>
        <end position="72"/>
    </location>
</feature>
<feature type="strand" evidence="2">
    <location>
        <begin position="78"/>
        <end position="88"/>
    </location>
</feature>
<feature type="strand" evidence="2">
    <location>
        <begin position="94"/>
        <end position="99"/>
    </location>
</feature>
<feature type="strand" evidence="2">
    <location>
        <begin position="104"/>
        <end position="106"/>
    </location>
</feature>
<feature type="strand" evidence="2">
    <location>
        <begin position="112"/>
        <end position="115"/>
    </location>
</feature>
<feature type="helix" evidence="2">
    <location>
        <begin position="119"/>
        <end position="130"/>
    </location>
</feature>
<feature type="turn" evidence="2">
    <location>
        <begin position="134"/>
        <end position="136"/>
    </location>
</feature>
<feature type="helix" evidence="2">
    <location>
        <begin position="137"/>
        <end position="140"/>
    </location>
</feature>
<feature type="helix" evidence="2">
    <location>
        <begin position="146"/>
        <end position="150"/>
    </location>
</feature>
<feature type="helix" evidence="2">
    <location>
        <begin position="157"/>
        <end position="159"/>
    </location>
</feature>
<feature type="strand" evidence="2">
    <location>
        <begin position="160"/>
        <end position="166"/>
    </location>
</feature>
<feature type="strand" evidence="2">
    <location>
        <begin position="169"/>
        <end position="176"/>
    </location>
</feature>
<feature type="helix" evidence="2">
    <location>
        <begin position="181"/>
        <end position="184"/>
    </location>
</feature>
<feature type="helix" evidence="2">
    <location>
        <begin position="188"/>
        <end position="190"/>
    </location>
</feature>
<feature type="helix" evidence="2">
    <location>
        <begin position="195"/>
        <end position="201"/>
    </location>
</feature>
<feature type="helix" evidence="2">
    <location>
        <begin position="202"/>
        <end position="204"/>
    </location>
</feature>
<feature type="helix" evidence="2">
    <location>
        <begin position="211"/>
        <end position="213"/>
    </location>
</feature>
<feature type="strand" evidence="2">
    <location>
        <begin position="218"/>
        <end position="226"/>
    </location>
</feature>
<feature type="turn" evidence="2">
    <location>
        <begin position="227"/>
        <end position="229"/>
    </location>
</feature>
<feature type="strand" evidence="2">
    <location>
        <begin position="230"/>
        <end position="235"/>
    </location>
</feature>
<feature type="helix" evidence="2">
    <location>
        <begin position="242"/>
        <end position="244"/>
    </location>
</feature>
<feature type="strand" evidence="2">
    <location>
        <begin position="248"/>
        <end position="254"/>
    </location>
</feature>
<feature type="helix" evidence="2">
    <location>
        <begin position="262"/>
        <end position="268"/>
    </location>
</feature>
<feature type="strand" evidence="2">
    <location>
        <begin position="273"/>
        <end position="276"/>
    </location>
</feature>
<feature type="helix" evidence="2">
    <location>
        <begin position="284"/>
        <end position="290"/>
    </location>
</feature>
<feature type="turn" evidence="2">
    <location>
        <begin position="291"/>
        <end position="294"/>
    </location>
</feature>
<feature type="strand" evidence="2">
    <location>
        <begin position="304"/>
        <end position="309"/>
    </location>
</feature>
<feature type="helix" evidence="2">
    <location>
        <begin position="324"/>
        <end position="334"/>
    </location>
</feature>
<feature type="helix" evidence="2">
    <location>
        <begin position="337"/>
        <end position="346"/>
    </location>
</feature>
<feature type="helix" evidence="2">
    <location>
        <begin position="349"/>
        <end position="357"/>
    </location>
</feature>
<feature type="turn" evidence="2">
    <location>
        <begin position="358"/>
        <end position="362"/>
    </location>
</feature>
<feature type="helix" evidence="2">
    <location>
        <begin position="363"/>
        <end position="365"/>
    </location>
</feature>
<feature type="strand" evidence="2">
    <location>
        <begin position="369"/>
        <end position="371"/>
    </location>
</feature>
<feature type="strand" evidence="2">
    <location>
        <begin position="375"/>
        <end position="378"/>
    </location>
</feature>
<feature type="helix" evidence="2">
    <location>
        <begin position="383"/>
        <end position="390"/>
    </location>
</feature>
<feature type="helix" evidence="2">
    <location>
        <begin position="391"/>
        <end position="394"/>
    </location>
</feature>
<feature type="helix" evidence="2">
    <location>
        <begin position="396"/>
        <end position="398"/>
    </location>
</feature>
<feature type="helix" evidence="2">
    <location>
        <begin position="413"/>
        <end position="429"/>
    </location>
</feature>
<feature type="strand" evidence="2">
    <location>
        <begin position="434"/>
        <end position="443"/>
    </location>
</feature>
<feature type="helix" evidence="2">
    <location>
        <begin position="447"/>
        <end position="464"/>
    </location>
</feature>
<feature type="turn" evidence="2">
    <location>
        <begin position="466"/>
        <end position="468"/>
    </location>
</feature>
<feature type="strand" evidence="2">
    <location>
        <begin position="469"/>
        <end position="476"/>
    </location>
</feature>
<feature type="helix" evidence="2">
    <location>
        <begin position="478"/>
        <end position="484"/>
    </location>
</feature>
<feature type="turn" evidence="2">
    <location>
        <begin position="485"/>
        <end position="487"/>
    </location>
</feature>
<feature type="helix" evidence="2">
    <location>
        <begin position="491"/>
        <end position="493"/>
    </location>
</feature>
<feature type="strand" evidence="2">
    <location>
        <begin position="497"/>
        <end position="499"/>
    </location>
</feature>
<feature type="strand" evidence="2">
    <location>
        <begin position="502"/>
        <end position="504"/>
    </location>
</feature>
<feature type="strand" evidence="2">
    <location>
        <begin position="507"/>
        <end position="510"/>
    </location>
</feature>
<feature type="helix" evidence="2">
    <location>
        <begin position="512"/>
        <end position="515"/>
    </location>
</feature>
<feature type="helix" evidence="2">
    <location>
        <begin position="516"/>
        <end position="518"/>
    </location>
</feature>
<feature type="helix" evidence="2">
    <location>
        <begin position="523"/>
        <end position="530"/>
    </location>
</feature>
<feature type="helix" evidence="2">
    <location>
        <begin position="538"/>
        <end position="542"/>
    </location>
</feature>
<feature type="helix" evidence="2">
    <location>
        <begin position="545"/>
        <end position="556"/>
    </location>
</feature>
<feature type="helix" evidence="2">
    <location>
        <begin position="562"/>
        <end position="579"/>
    </location>
</feature>
<feature type="strand" evidence="2">
    <location>
        <begin position="581"/>
        <end position="589"/>
    </location>
</feature>
<feature type="strand" evidence="2">
    <location>
        <begin position="591"/>
        <end position="596"/>
    </location>
</feature>
<feature type="strand" evidence="2">
    <location>
        <begin position="607"/>
        <end position="610"/>
    </location>
</feature>
<feature type="turn" evidence="2">
    <location>
        <begin position="613"/>
        <end position="615"/>
    </location>
</feature>
<feature type="helix" evidence="2">
    <location>
        <begin position="629"/>
        <end position="653"/>
    </location>
</feature>
<feature type="helix" evidence="2">
    <location>
        <begin position="654"/>
        <end position="657"/>
    </location>
</feature>
<proteinExistence type="evidence at protein level"/>
<organism>
    <name type="scientific">Streptococcus pneumoniae serotype 4 (strain ATCC BAA-334 / TIGR4)</name>
    <dbReference type="NCBI Taxonomy" id="170187"/>
    <lineage>
        <taxon>Bacteria</taxon>
        <taxon>Bacillati</taxon>
        <taxon>Bacillota</taxon>
        <taxon>Bacilli</taxon>
        <taxon>Lactobacillales</taxon>
        <taxon>Streptococcaceae</taxon>
        <taxon>Streptococcus</taxon>
    </lineage>
</organism>
<keyword id="KW-0002">3D-structure</keyword>
<keyword id="KW-1003">Cell membrane</keyword>
<keyword id="KW-0903">Direct protein sequencing</keyword>
<keyword id="KW-0449">Lipoprotein</keyword>
<keyword id="KW-0472">Membrane</keyword>
<keyword id="KW-0564">Palmitate</keyword>
<keyword id="KW-0571">Peptide transport</keyword>
<keyword id="KW-0653">Protein transport</keyword>
<keyword id="KW-1185">Reference proteome</keyword>
<keyword id="KW-0732">Signal</keyword>
<keyword id="KW-0813">Transport</keyword>
<reference key="1">
    <citation type="journal article" date="1990" name="Mol. Microbiol.">
        <title>The ami locus of the Gram-positive bacterium Streptococcus pneumoniae is similar to binding protein-dependent transport operons of Gram-negative bacteria.</title>
        <authorList>
            <person name="Alloing G."/>
            <person name="Trombe M.C."/>
            <person name="Claverys J.-P."/>
        </authorList>
    </citation>
    <scope>NUCLEOTIDE SEQUENCE [GENOMIC DNA]</scope>
    <source>
        <strain>R6 / R800</strain>
    </source>
</reference>
<reference key="2">
    <citation type="submission" date="1992-09" db="EMBL/GenBank/DDBJ databases">
        <authorList>
            <person name="Claverys J.-P."/>
        </authorList>
    </citation>
    <scope>SEQUENCE REVISION</scope>
</reference>
<reference key="3">
    <citation type="journal article" date="2001" name="Science">
        <title>Complete genome sequence of a virulent isolate of Streptococcus pneumoniae.</title>
        <authorList>
            <person name="Tettelin H."/>
            <person name="Nelson K.E."/>
            <person name="Paulsen I.T."/>
            <person name="Eisen J.A."/>
            <person name="Read T.D."/>
            <person name="Peterson S.N."/>
            <person name="Heidelberg J.F."/>
            <person name="DeBoy R.T."/>
            <person name="Haft D.H."/>
            <person name="Dodson R.J."/>
            <person name="Durkin A.S."/>
            <person name="Gwinn M.L."/>
            <person name="Kolonay J.F."/>
            <person name="Nelson W.C."/>
            <person name="Peterson J.D."/>
            <person name="Umayam L.A."/>
            <person name="White O."/>
            <person name="Salzberg S.L."/>
            <person name="Lewis M.R."/>
            <person name="Radune D."/>
            <person name="Holtzapple E.K."/>
            <person name="Khouri H.M."/>
            <person name="Wolf A.M."/>
            <person name="Utterback T.R."/>
            <person name="Hansen C.L."/>
            <person name="McDonald L.A."/>
            <person name="Feldblyum T.V."/>
            <person name="Angiuoli S.V."/>
            <person name="Dickinson T."/>
            <person name="Hickey E.K."/>
            <person name="Holt I.E."/>
            <person name="Loftus B.J."/>
            <person name="Yang F."/>
            <person name="Smith H.O."/>
            <person name="Venter J.C."/>
            <person name="Dougherty B.A."/>
            <person name="Morrison D.A."/>
            <person name="Hollingshead S.K."/>
            <person name="Fraser C.M."/>
        </authorList>
    </citation>
    <scope>NUCLEOTIDE SEQUENCE [LARGE SCALE GENOMIC DNA]</scope>
    <source>
        <strain>ATCC BAA-334 / TIGR4</strain>
    </source>
</reference>
<reference key="4">
    <citation type="journal article" date="1989" name="Gene">
        <title>The difficulty of cloning Streptococcus pneumoniae mal and ami loci in Escherichia coli: toxicity of malX and amiA gene products.</title>
        <authorList>
            <person name="Martin B."/>
            <person name="Alloing G."/>
            <person name="Boucraut C."/>
            <person name="Claverys J.-P."/>
        </authorList>
    </citation>
    <scope>NUCLEOTIDE SEQUENCE [GENOMIC DNA] OF 1-28</scope>
    <source>
        <strain>R6 / R800</strain>
    </source>
</reference>
<reference key="5">
    <citation type="journal article" date="1988" name="EMBO J.">
        <title>Evidence for high affinity binding-protein dependent transport systems in Gram-positive bacteria and in Mycoplasma.</title>
        <authorList>
            <person name="Gilson E."/>
            <person name="Alloing G."/>
            <person name="Schmidt T."/>
            <person name="Claverys J.-P."/>
            <person name="Dudler R."/>
            <person name="Hofnung M."/>
        </authorList>
    </citation>
    <scope>PARTIAL PROTEIN SEQUENCE</scope>
</reference>
<gene>
    <name type="primary">amiA</name>
    <name type="ordered locus">SP_1891</name>
</gene>
<name>AMIA_STRPN</name>
<accession>P18791</accession>
<accession>P18792</accession>
<evidence type="ECO:0000305" key="1"/>
<evidence type="ECO:0007829" key="2">
    <source>
        <dbReference type="PDB" id="8A42"/>
    </source>
</evidence>
<comment type="function">
    <text>Part of the binding-protein-dependent transport system for oligopeptides; probably an oligopeptide binding protein.</text>
</comment>
<comment type="subcellular location">
    <subcellularLocation>
        <location>Cell membrane</location>
        <topology>Lipid-anchor</topology>
    </subcellularLocation>
</comment>
<comment type="similarity">
    <text evidence="1">Belongs to the bacterial solute-binding protein 5 family.</text>
</comment>
<comment type="caution">
    <text evidence="1">The revised sequence of AmiA now includes, in the C-terminal section, the sequence of an ORF which was previously known as AmiB.</text>
</comment>
<sequence>MKKNRVFATAGLVLLAAGVLAACSSSKSSDSSAPKAYGYVYTADPETLDYLISSKNSTTVVTSNGIDGLFTNDNYGNLAPAVAEDWEVSKDGLTYTYKIRKGVKWFTSDGEEYAEVTAKDFVNGLKHAADKKSEAMYLAENSVKGLADYLSGTSTDFSTVGVKAVDDYTLQYTLNQPEPFWNSKLTYSIFWPLNEEFETSKGSDFAKPTDPTSLLYNGPFLLKGLTAKSSVEFVKNEQYWDKENVHLDTINLAYYDGSDQESLERNFTSGAYSYARLYPTSSNYSKVAEEYKDNIYYTQSGSGIAGLGVNIDRQSYNYTSKTTDSEKVATKKALLNKDFRQALNFALDRSAYSAQINGKDGAALAVRNLFVKPDFVSAGEKTFGDLVAAQLPAYGDEWKGVNLADGQDGLFNADKAKAEFAKAKKALEADGVQFPIHLDVPVDQASKNYISRIQSFKQSVETVLGVENVVVDIQQMTSDEFLNITYYAANASSEDWDVSGGVSWGPDYQDPSTYLDILKTTSSETTKTYLGFDNPNSPSVVQVGLKEYDKLVDEAARETSDLNVRYEKYAAAQAWLTDSSLFIPAMASSGAAPVLSRIVPFTGASAQTGSKGSDVYFKYLKSQDKVVTKEEYEKAREKWLKEKAESNEKAQKELASHVK</sequence>
<dbReference type="EMBL" id="X17337">
    <property type="protein sequence ID" value="CAA35213.1"/>
    <property type="molecule type" value="Genomic_DNA"/>
</dbReference>
<dbReference type="EMBL" id="AE005672">
    <property type="protein sequence ID" value="AAK75962.1"/>
    <property type="molecule type" value="Genomic_DNA"/>
</dbReference>
<dbReference type="PIR" id="A95221">
    <property type="entry name" value="A95221"/>
</dbReference>
<dbReference type="PIR" id="S11148">
    <property type="entry name" value="S11148"/>
</dbReference>
<dbReference type="PIR" id="S11149">
    <property type="entry name" value="S11149"/>
</dbReference>
<dbReference type="RefSeq" id="WP_000742235.1">
    <property type="nucleotide sequence ID" value="NC_003028.3"/>
</dbReference>
<dbReference type="PDB" id="8A42">
    <property type="method" value="X-ray"/>
    <property type="resolution" value="1.50 A"/>
    <property type="chains" value="A=22-659"/>
</dbReference>
<dbReference type="PDB" id="8QM0">
    <property type="method" value="X-ray"/>
    <property type="resolution" value="1.76 A"/>
    <property type="chains" value="A/B/C/D=22-659"/>
</dbReference>
<dbReference type="PDBsum" id="8A42"/>
<dbReference type="PDBsum" id="8QM0"/>
<dbReference type="SMR" id="P18791"/>
<dbReference type="PaxDb" id="170187-SP_1891"/>
<dbReference type="EnsemblBacteria" id="AAK75962">
    <property type="protein sequence ID" value="AAK75962"/>
    <property type="gene ID" value="SP_1891"/>
</dbReference>
<dbReference type="KEGG" id="spn:SP_1891"/>
<dbReference type="eggNOG" id="COG4166">
    <property type="taxonomic scope" value="Bacteria"/>
</dbReference>
<dbReference type="PhylomeDB" id="P18791"/>
<dbReference type="BioCyc" id="SPNE170187:G1FZB-1921-MONOMER"/>
<dbReference type="Proteomes" id="UP000000585">
    <property type="component" value="Chromosome"/>
</dbReference>
<dbReference type="GO" id="GO:0043190">
    <property type="term" value="C:ATP-binding cassette (ABC) transporter complex"/>
    <property type="evidence" value="ECO:0007669"/>
    <property type="project" value="InterPro"/>
</dbReference>
<dbReference type="GO" id="GO:0042597">
    <property type="term" value="C:periplasmic space"/>
    <property type="evidence" value="ECO:0007669"/>
    <property type="project" value="UniProtKB-ARBA"/>
</dbReference>
<dbReference type="GO" id="GO:1904680">
    <property type="term" value="F:peptide transmembrane transporter activity"/>
    <property type="evidence" value="ECO:0007669"/>
    <property type="project" value="TreeGrafter"/>
</dbReference>
<dbReference type="GO" id="GO:0015833">
    <property type="term" value="P:peptide transport"/>
    <property type="evidence" value="ECO:0007669"/>
    <property type="project" value="UniProtKB-KW"/>
</dbReference>
<dbReference type="GO" id="GO:0015031">
    <property type="term" value="P:protein transport"/>
    <property type="evidence" value="ECO:0007669"/>
    <property type="project" value="UniProtKB-KW"/>
</dbReference>
<dbReference type="CDD" id="cd08504">
    <property type="entry name" value="PBP2_OppA"/>
    <property type="match status" value="1"/>
</dbReference>
<dbReference type="Gene3D" id="3.90.76.10">
    <property type="entry name" value="Dipeptide-binding Protein, Domain 1"/>
    <property type="match status" value="1"/>
</dbReference>
<dbReference type="Gene3D" id="3.10.105.10">
    <property type="entry name" value="Dipeptide-binding Protein, Domain 3"/>
    <property type="match status" value="1"/>
</dbReference>
<dbReference type="Gene3D" id="3.40.190.10">
    <property type="entry name" value="Periplasmic binding protein-like II"/>
    <property type="match status" value="1"/>
</dbReference>
<dbReference type="InterPro" id="IPR030678">
    <property type="entry name" value="Peptide/Ni-bd"/>
</dbReference>
<dbReference type="InterPro" id="IPR039424">
    <property type="entry name" value="SBP_5"/>
</dbReference>
<dbReference type="InterPro" id="IPR023765">
    <property type="entry name" value="SBP_5_CS"/>
</dbReference>
<dbReference type="InterPro" id="IPR000914">
    <property type="entry name" value="SBP_5_dom"/>
</dbReference>
<dbReference type="PANTHER" id="PTHR30290">
    <property type="entry name" value="PERIPLASMIC BINDING COMPONENT OF ABC TRANSPORTER"/>
    <property type="match status" value="1"/>
</dbReference>
<dbReference type="PANTHER" id="PTHR30290:SF10">
    <property type="entry name" value="PERIPLASMIC OLIGOPEPTIDE-BINDING PROTEIN-RELATED"/>
    <property type="match status" value="1"/>
</dbReference>
<dbReference type="Pfam" id="PF00496">
    <property type="entry name" value="SBP_bac_5"/>
    <property type="match status" value="1"/>
</dbReference>
<dbReference type="PIRSF" id="PIRSF002741">
    <property type="entry name" value="MppA"/>
    <property type="match status" value="1"/>
</dbReference>
<dbReference type="SUPFAM" id="SSF53850">
    <property type="entry name" value="Periplasmic binding protein-like II"/>
    <property type="match status" value="1"/>
</dbReference>
<dbReference type="PROSITE" id="PS51257">
    <property type="entry name" value="PROKAR_LIPOPROTEIN"/>
    <property type="match status" value="1"/>
</dbReference>
<dbReference type="PROSITE" id="PS01040">
    <property type="entry name" value="SBP_BACTERIAL_5"/>
    <property type="match status" value="1"/>
</dbReference>